<protein>
    <recommendedName>
        <fullName>Histone acetyltransferase ESA1</fullName>
        <ecNumber evidence="3">2.3.1.48</ecNumber>
    </recommendedName>
    <alternativeName>
        <fullName evidence="7">Protein 2-hydroxyisobutyryltransferase ESA1</fullName>
        <ecNumber evidence="2">2.3.1.-</ecNumber>
    </alternativeName>
    <alternativeName>
        <fullName evidence="7">Protein acetyltransferase ESA1</fullName>
        <ecNumber evidence="3">2.3.1.-</ecNumber>
    </alternativeName>
    <alternativeName>
        <fullName evidence="7">Protein crotonyltransferase ESA1</fullName>
        <ecNumber evidence="3">2.3.1.-</ecNumber>
    </alternativeName>
</protein>
<dbReference type="EC" id="2.3.1.48" evidence="3"/>
<dbReference type="EC" id="2.3.1.-" evidence="2 3"/>
<dbReference type="EMBL" id="AE016816">
    <property type="protein sequence ID" value="AAS51364.2"/>
    <property type="molecule type" value="Genomic_DNA"/>
</dbReference>
<dbReference type="RefSeq" id="NP_983540.2">
    <property type="nucleotide sequence ID" value="NM_208893.2"/>
</dbReference>
<dbReference type="SMR" id="Q75BY2"/>
<dbReference type="FunCoup" id="Q75BY2">
    <property type="interactions" value="1064"/>
</dbReference>
<dbReference type="STRING" id="284811.Q75BY2"/>
<dbReference type="EnsemblFungi" id="AAS51364">
    <property type="protein sequence ID" value="AAS51364"/>
    <property type="gene ID" value="AGOS_ACR138W"/>
</dbReference>
<dbReference type="GeneID" id="4619672"/>
<dbReference type="KEGG" id="ago:AGOS_ACR138W"/>
<dbReference type="eggNOG" id="KOG2747">
    <property type="taxonomic scope" value="Eukaryota"/>
</dbReference>
<dbReference type="HOGENOM" id="CLU_011815_2_0_1"/>
<dbReference type="InParanoid" id="Q75BY2"/>
<dbReference type="OMA" id="QYQRHGY"/>
<dbReference type="OrthoDB" id="787137at2759"/>
<dbReference type="Proteomes" id="UP000000591">
    <property type="component" value="Chromosome III"/>
</dbReference>
<dbReference type="GO" id="GO:0000785">
    <property type="term" value="C:chromatin"/>
    <property type="evidence" value="ECO:0000318"/>
    <property type="project" value="GO_Central"/>
</dbReference>
<dbReference type="GO" id="GO:0035267">
    <property type="term" value="C:NuA4 histone acetyltransferase complex"/>
    <property type="evidence" value="ECO:0007669"/>
    <property type="project" value="EnsemblFungi"/>
</dbReference>
<dbReference type="GO" id="GO:0000786">
    <property type="term" value="C:nucleosome"/>
    <property type="evidence" value="ECO:0007669"/>
    <property type="project" value="EnsemblFungi"/>
</dbReference>
<dbReference type="GO" id="GO:0005634">
    <property type="term" value="C:nucleus"/>
    <property type="evidence" value="ECO:0000318"/>
    <property type="project" value="GO_Central"/>
</dbReference>
<dbReference type="GO" id="GO:0032777">
    <property type="term" value="C:piccolo histone acetyltransferase complex"/>
    <property type="evidence" value="ECO:0007669"/>
    <property type="project" value="EnsemblFungi"/>
</dbReference>
<dbReference type="GO" id="GO:0003682">
    <property type="term" value="F:chromatin binding"/>
    <property type="evidence" value="ECO:0000318"/>
    <property type="project" value="GO_Central"/>
</dbReference>
<dbReference type="GO" id="GO:0004402">
    <property type="term" value="F:histone acetyltransferase activity"/>
    <property type="evidence" value="ECO:0000318"/>
    <property type="project" value="GO_Central"/>
</dbReference>
<dbReference type="GO" id="GO:0140068">
    <property type="term" value="F:histone crotonyltransferase activity"/>
    <property type="evidence" value="ECO:0007669"/>
    <property type="project" value="EnsemblFungi"/>
</dbReference>
<dbReference type="GO" id="GO:0010485">
    <property type="term" value="F:histone H4 acetyltransferase activity"/>
    <property type="evidence" value="ECO:0007669"/>
    <property type="project" value="EnsemblFungi"/>
</dbReference>
<dbReference type="GO" id="GO:0106226">
    <property type="term" value="F:peptide 2-hydroxyisobutyryltransferase activity"/>
    <property type="evidence" value="ECO:0007669"/>
    <property type="project" value="RHEA"/>
</dbReference>
<dbReference type="GO" id="GO:0003712">
    <property type="term" value="F:transcription coregulator activity"/>
    <property type="evidence" value="ECO:0000318"/>
    <property type="project" value="GO_Central"/>
</dbReference>
<dbReference type="GO" id="GO:0006281">
    <property type="term" value="P:DNA repair"/>
    <property type="evidence" value="ECO:0007669"/>
    <property type="project" value="UniProtKB-KW"/>
</dbReference>
<dbReference type="GO" id="GO:0006354">
    <property type="term" value="P:DNA-templated transcription elongation"/>
    <property type="evidence" value="ECO:0007669"/>
    <property type="project" value="EnsemblFungi"/>
</dbReference>
<dbReference type="GO" id="GO:0016239">
    <property type="term" value="P:positive regulation of macroautophagy"/>
    <property type="evidence" value="ECO:0007669"/>
    <property type="project" value="EnsemblFungi"/>
</dbReference>
<dbReference type="GO" id="GO:0032968">
    <property type="term" value="P:positive regulation of transcription elongation by RNA polymerase II"/>
    <property type="evidence" value="ECO:0007669"/>
    <property type="project" value="EnsemblFungi"/>
</dbReference>
<dbReference type="GO" id="GO:0010867">
    <property type="term" value="P:positive regulation of triglyceride biosynthetic process"/>
    <property type="evidence" value="ECO:0007669"/>
    <property type="project" value="EnsemblFungi"/>
</dbReference>
<dbReference type="GO" id="GO:0000183">
    <property type="term" value="P:rDNA heterochromatin formation"/>
    <property type="evidence" value="ECO:0007669"/>
    <property type="project" value="EnsemblFungi"/>
</dbReference>
<dbReference type="GO" id="GO:0051726">
    <property type="term" value="P:regulation of cell cycle"/>
    <property type="evidence" value="ECO:0007669"/>
    <property type="project" value="EnsemblFungi"/>
</dbReference>
<dbReference type="GO" id="GO:0006357">
    <property type="term" value="P:regulation of transcription by RNA polymerase II"/>
    <property type="evidence" value="ECO:0000318"/>
    <property type="project" value="GO_Central"/>
</dbReference>
<dbReference type="CDD" id="cd18986">
    <property type="entry name" value="CBD_ESA1_like"/>
    <property type="match status" value="1"/>
</dbReference>
<dbReference type="CDD" id="cd04301">
    <property type="entry name" value="NAT_SF"/>
    <property type="match status" value="1"/>
</dbReference>
<dbReference type="FunFam" id="1.10.10.10:FF:000526">
    <property type="entry name" value="Histone acetyltransferase"/>
    <property type="match status" value="1"/>
</dbReference>
<dbReference type="FunFam" id="3.30.60.60:FF:000001">
    <property type="entry name" value="Histone acetyltransferase"/>
    <property type="match status" value="1"/>
</dbReference>
<dbReference type="FunFam" id="3.40.630.30:FF:000002">
    <property type="entry name" value="Histone acetyltransferase"/>
    <property type="match status" value="1"/>
</dbReference>
<dbReference type="Gene3D" id="2.30.30.140">
    <property type="match status" value="1"/>
</dbReference>
<dbReference type="Gene3D" id="3.40.630.30">
    <property type="match status" value="1"/>
</dbReference>
<dbReference type="Gene3D" id="3.30.60.60">
    <property type="entry name" value="N-acetyl transferase-like"/>
    <property type="match status" value="1"/>
</dbReference>
<dbReference type="Gene3D" id="1.10.10.10">
    <property type="entry name" value="Winged helix-like DNA-binding domain superfamily/Winged helix DNA-binding domain"/>
    <property type="match status" value="1"/>
</dbReference>
<dbReference type="InterPro" id="IPR016181">
    <property type="entry name" value="Acyl_CoA_acyltransferase"/>
</dbReference>
<dbReference type="InterPro" id="IPR016197">
    <property type="entry name" value="Chromo-like_dom_sf"/>
</dbReference>
<dbReference type="InterPro" id="IPR002717">
    <property type="entry name" value="HAT_MYST-type"/>
</dbReference>
<dbReference type="InterPro" id="IPR050603">
    <property type="entry name" value="MYST_HAT"/>
</dbReference>
<dbReference type="InterPro" id="IPR025995">
    <property type="entry name" value="Tudor-knot"/>
</dbReference>
<dbReference type="InterPro" id="IPR036388">
    <property type="entry name" value="WH-like_DNA-bd_sf"/>
</dbReference>
<dbReference type="InterPro" id="IPR040706">
    <property type="entry name" value="Zf-MYST"/>
</dbReference>
<dbReference type="PANTHER" id="PTHR10615">
    <property type="entry name" value="HISTONE ACETYLTRANSFERASE"/>
    <property type="match status" value="1"/>
</dbReference>
<dbReference type="PANTHER" id="PTHR10615:SF218">
    <property type="entry name" value="HISTONE ACETYLTRANSFERASE ESA1"/>
    <property type="match status" value="1"/>
</dbReference>
<dbReference type="Pfam" id="PF01853">
    <property type="entry name" value="MOZ_SAS"/>
    <property type="match status" value="1"/>
</dbReference>
<dbReference type="Pfam" id="PF11717">
    <property type="entry name" value="Tudor-knot"/>
    <property type="match status" value="1"/>
</dbReference>
<dbReference type="Pfam" id="PF17772">
    <property type="entry name" value="zf-MYST"/>
    <property type="match status" value="1"/>
</dbReference>
<dbReference type="SUPFAM" id="SSF55729">
    <property type="entry name" value="Acyl-CoA N-acyltransferases (Nat)"/>
    <property type="match status" value="1"/>
</dbReference>
<dbReference type="SUPFAM" id="SSF54160">
    <property type="entry name" value="Chromo domain-like"/>
    <property type="match status" value="1"/>
</dbReference>
<dbReference type="PROSITE" id="PS51726">
    <property type="entry name" value="MYST_HAT"/>
    <property type="match status" value="1"/>
</dbReference>
<proteinExistence type="inferred from homology"/>
<comment type="function">
    <text evidence="2 3">Catalytic component of the NuA4 histone acetyltransferase (HAT) complex which is involved in epigenetic transcriptional activation of selected genes principally by acetylation of nucleosomal histones H4, H3, H2B, H2A and H2A variant H2A.Z (By similarity). Acetylates histone H4 to form H4K5ac, H4K8ac, H4K12ac and H4K16ac, histone H3 to form H3K14ac, and histone H2A to form H2AK4ac and H2AK7ac (By similarity). The NuA4 complex is involved in the DNA damage response and is required for chromosome segregation. The NuA4 complex plays a direct role in repair of DNA double-strand breaks (DSBs) through homologous recombination (By similarity). Recruitment to promoters depends on H3K4me. Also acetylates non-histone proteins (By similarity). In addition to protein acetyltransferase, can use different acyl-CoA substrates, such as 2-hydroxyisobutanoyl-CoA (2-hydroxyisobutyryl-CoA) or (2E)-butenoyl-CoA (crotonyl-CoA), and is able to mediate protein 2-hydroxyisobutyrylation and crotonylation, respectively (By similarity).</text>
</comment>
<comment type="catalytic activity">
    <reaction evidence="2">
        <text>L-lysyl-[histone] + acetyl-CoA = N(6)-acetyl-L-lysyl-[histone] + CoA + H(+)</text>
        <dbReference type="Rhea" id="RHEA:21992"/>
        <dbReference type="Rhea" id="RHEA-COMP:9845"/>
        <dbReference type="Rhea" id="RHEA-COMP:11338"/>
        <dbReference type="ChEBI" id="CHEBI:15378"/>
        <dbReference type="ChEBI" id="CHEBI:29969"/>
        <dbReference type="ChEBI" id="CHEBI:57287"/>
        <dbReference type="ChEBI" id="CHEBI:57288"/>
        <dbReference type="ChEBI" id="CHEBI:61930"/>
        <dbReference type="EC" id="2.3.1.48"/>
    </reaction>
    <physiologicalReaction direction="left-to-right" evidence="2">
        <dbReference type="Rhea" id="RHEA:21993"/>
    </physiologicalReaction>
</comment>
<comment type="catalytic activity">
    <reaction evidence="3">
        <text>L-lysyl-[protein] + acetyl-CoA = N(6)-acetyl-L-lysyl-[protein] + CoA + H(+)</text>
        <dbReference type="Rhea" id="RHEA:45948"/>
        <dbReference type="Rhea" id="RHEA-COMP:9752"/>
        <dbReference type="Rhea" id="RHEA-COMP:10731"/>
        <dbReference type="ChEBI" id="CHEBI:15378"/>
        <dbReference type="ChEBI" id="CHEBI:29969"/>
        <dbReference type="ChEBI" id="CHEBI:57287"/>
        <dbReference type="ChEBI" id="CHEBI:57288"/>
        <dbReference type="ChEBI" id="CHEBI:61930"/>
    </reaction>
    <physiologicalReaction direction="left-to-right" evidence="3">
        <dbReference type="Rhea" id="RHEA:45949"/>
    </physiologicalReaction>
</comment>
<comment type="catalytic activity">
    <reaction evidence="2">
        <text>2-hydroxyisobutanoyl-CoA + L-lysyl-[protein] = N(6)-(2-hydroxyisobutanoyl)-L-lysyl-[protein] + CoA + H(+)</text>
        <dbReference type="Rhea" id="RHEA:24180"/>
        <dbReference type="Rhea" id="RHEA-COMP:9752"/>
        <dbReference type="Rhea" id="RHEA-COMP:15921"/>
        <dbReference type="ChEBI" id="CHEBI:15378"/>
        <dbReference type="ChEBI" id="CHEBI:29969"/>
        <dbReference type="ChEBI" id="CHEBI:57287"/>
        <dbReference type="ChEBI" id="CHEBI:131780"/>
        <dbReference type="ChEBI" id="CHEBI:144968"/>
    </reaction>
    <physiologicalReaction direction="left-to-right" evidence="2">
        <dbReference type="Rhea" id="RHEA:24181"/>
    </physiologicalReaction>
</comment>
<comment type="catalytic activity">
    <reaction evidence="3">
        <text>(2E)-butenoyl-CoA + L-lysyl-[protein] = N(6)-(2E)-butenoyl-L-lysyl-[protein] + CoA + H(+)</text>
        <dbReference type="Rhea" id="RHEA:53908"/>
        <dbReference type="Rhea" id="RHEA-COMP:9752"/>
        <dbReference type="Rhea" id="RHEA-COMP:13707"/>
        <dbReference type="ChEBI" id="CHEBI:15378"/>
        <dbReference type="ChEBI" id="CHEBI:29969"/>
        <dbReference type="ChEBI" id="CHEBI:57287"/>
        <dbReference type="ChEBI" id="CHEBI:57332"/>
        <dbReference type="ChEBI" id="CHEBI:137954"/>
    </reaction>
    <physiologicalReaction direction="left-to-right" evidence="3">
        <dbReference type="Rhea" id="RHEA:53909"/>
    </physiologicalReaction>
</comment>
<comment type="subunit">
    <text evidence="2 3">Component of the NuA4 histone acetyltransferase complex (By similarity). Interacts with arp4 (By similarity).</text>
</comment>
<comment type="subcellular location">
    <subcellularLocation>
        <location evidence="2">Nucleus</location>
    </subcellularLocation>
    <subcellularLocation>
        <location evidence="2">Chromosome</location>
    </subcellularLocation>
    <text evidence="2">Localizes to pericentric heterochromatin. Following DNA damage, localizes to sites of DNA damage, such as double stand breaks (DSBs).</text>
</comment>
<comment type="domain">
    <text evidence="3">The ESA1-RPD3 motif is common to ESA1 and RPD3 and is required for ESA1 histone acetyl-transferase (HAT) activity and RPD3 histone deacetylase (HDAC) activity.</text>
</comment>
<comment type="PTM">
    <text evidence="3">Autoacetylation at Lys-252 is required for proper function.</text>
</comment>
<comment type="similarity">
    <text evidence="7">Belongs to the MYST (SAS/MOZ) family.</text>
</comment>
<reference key="1">
    <citation type="journal article" date="2004" name="Science">
        <title>The Ashbya gossypii genome as a tool for mapping the ancient Saccharomyces cerevisiae genome.</title>
        <authorList>
            <person name="Dietrich F.S."/>
            <person name="Voegeli S."/>
            <person name="Brachat S."/>
            <person name="Lerch A."/>
            <person name="Gates K."/>
            <person name="Steiner S."/>
            <person name="Mohr C."/>
            <person name="Poehlmann R."/>
            <person name="Luedi P."/>
            <person name="Choi S."/>
            <person name="Wing R.A."/>
            <person name="Flavier A."/>
            <person name="Gaffney T.D."/>
            <person name="Philippsen P."/>
        </authorList>
    </citation>
    <scope>NUCLEOTIDE SEQUENCE [LARGE SCALE GENOMIC DNA]</scope>
    <source>
        <strain>ATCC 10895 / CBS 109.51 / FGSC 9923 / NRRL Y-1056</strain>
    </source>
</reference>
<reference key="2">
    <citation type="journal article" date="2013" name="G3 (Bethesda)">
        <title>Genomes of Ashbya fungi isolated from insects reveal four mating-type loci, numerous translocations, lack of transposons, and distinct gene duplications.</title>
        <authorList>
            <person name="Dietrich F.S."/>
            <person name="Voegeli S."/>
            <person name="Kuo S."/>
            <person name="Philippsen P."/>
        </authorList>
    </citation>
    <scope>GENOME REANNOTATION</scope>
    <source>
        <strain>ATCC 10895 / CBS 109.51 / FGSC 9923 / NRRL Y-1056</strain>
    </source>
</reference>
<gene>
    <name type="primary">ESA1</name>
    <name type="ordered locus">ACR138W</name>
</gene>
<organism>
    <name type="scientific">Eremothecium gossypii (strain ATCC 10895 / CBS 109.51 / FGSC 9923 / NRRL Y-1056)</name>
    <name type="common">Yeast</name>
    <name type="synonym">Ashbya gossypii</name>
    <dbReference type="NCBI Taxonomy" id="284811"/>
    <lineage>
        <taxon>Eukaryota</taxon>
        <taxon>Fungi</taxon>
        <taxon>Dikarya</taxon>
        <taxon>Ascomycota</taxon>
        <taxon>Saccharomycotina</taxon>
        <taxon>Saccharomycetes</taxon>
        <taxon>Saccharomycetales</taxon>
        <taxon>Saccharomycetaceae</taxon>
        <taxon>Eremothecium</taxon>
    </lineage>
</organism>
<evidence type="ECO:0000250" key="1"/>
<evidence type="ECO:0000250" key="2">
    <source>
        <dbReference type="UniProtKB" id="O94446"/>
    </source>
</evidence>
<evidence type="ECO:0000250" key="3">
    <source>
        <dbReference type="UniProtKB" id="Q08649"/>
    </source>
</evidence>
<evidence type="ECO:0000255" key="4"/>
<evidence type="ECO:0000255" key="5">
    <source>
        <dbReference type="PROSITE-ProRule" id="PRU01063"/>
    </source>
</evidence>
<evidence type="ECO:0000256" key="6">
    <source>
        <dbReference type="SAM" id="MobiDB-lite"/>
    </source>
</evidence>
<evidence type="ECO:0000305" key="7"/>
<accession>Q75BY2</accession>
<name>ESA1_EREGS</name>
<keyword id="KW-0007">Acetylation</keyword>
<keyword id="KW-0010">Activator</keyword>
<keyword id="KW-0156">Chromatin regulator</keyword>
<keyword id="KW-0158">Chromosome</keyword>
<keyword id="KW-0227">DNA damage</keyword>
<keyword id="KW-0234">DNA repair</keyword>
<keyword id="KW-0539">Nucleus</keyword>
<keyword id="KW-1185">Reference proteome</keyword>
<keyword id="KW-0804">Transcription</keyword>
<keyword id="KW-0805">Transcription regulation</keyword>
<keyword id="KW-0808">Transferase</keyword>
<feature type="chain" id="PRO_0000051551" description="Histone acetyltransferase ESA1">
    <location>
        <begin position="1"/>
        <end position="435"/>
    </location>
</feature>
<feature type="domain" description="Tudor-knot" evidence="4">
    <location>
        <begin position="22"/>
        <end position="73"/>
    </location>
</feature>
<feature type="domain" description="MYST-type HAT" evidence="5">
    <location>
        <begin position="152"/>
        <end position="423"/>
    </location>
</feature>
<feature type="zinc finger region" description="C2HC MYST-type; degenerate" evidence="5">
    <location>
        <begin position="185"/>
        <end position="210"/>
    </location>
</feature>
<feature type="region of interest" description="Disordered" evidence="6">
    <location>
        <begin position="78"/>
        <end position="108"/>
    </location>
</feature>
<feature type="short sequence motif" description="ESA1-RPD3 motif" evidence="1">
    <location>
        <begin position="235"/>
        <end position="256"/>
    </location>
</feature>
<feature type="compositionally biased region" description="Basic and acidic residues" evidence="6">
    <location>
        <begin position="78"/>
        <end position="89"/>
    </location>
</feature>
<feature type="active site" description="Proton donor/acceptor" evidence="3">
    <location>
        <position position="328"/>
    </location>
</feature>
<feature type="binding site" evidence="3">
    <location>
        <begin position="293"/>
        <end position="297"/>
    </location>
    <ligand>
        <name>acetyl-CoA</name>
        <dbReference type="ChEBI" id="CHEBI:57288"/>
    </ligand>
</feature>
<feature type="binding site" evidence="3">
    <location>
        <begin position="302"/>
        <end position="308"/>
    </location>
    <ligand>
        <name>acetyl-CoA</name>
        <dbReference type="ChEBI" id="CHEBI:57288"/>
    </ligand>
</feature>
<feature type="binding site" evidence="3">
    <location>
        <position position="332"/>
    </location>
    <ligand>
        <name>acetyl-CoA</name>
        <dbReference type="ChEBI" id="CHEBI:57288"/>
    </ligand>
</feature>
<feature type="site" description="Important for catalytic activity" evidence="3">
    <location>
        <position position="294"/>
    </location>
</feature>
<feature type="modified residue" description="N6-acetyllysine; by autocatalysis" evidence="3">
    <location>
        <position position="252"/>
    </location>
</feature>
<sequence>MAQEEEKDAGISKYISTTDEIIIGCKCWVEKDGEQRLAEILSINNRRQPPKFYVHYEDFNKRLDEWILASRINIEREVTFPKPRDPDEKKKKKQKKSATPQATDGETLESADIMDLENLNVQGLRDEGISRDDEIKKLRTSGSMTQNPHEVSRVRNLSKIIMGKHEIEPWYFSPYPIELTDEDVVYIDDFSLQYFGSKKQYARYRQKCTLRHPPGNEIYRDDYVSFFEIDGRKQRTWCRNLCLLSKLFLDHKTLYYDVDPFLFYCMTQRDELGHHLVGYFSKEKESADGYNVACILTLPQYQRMGYGRLLIEFSYELSKKENKVGSPEKPLSDLGLLSYRAYWSDTLIKLLVENGTEITIDEISSMTSLTTTDILHTAKALNILRYYKGQHILYLNEDVLLRYEKLIAKKRRSIDPEKLIWKPPIFTASQLRFAW</sequence>